<dbReference type="EMBL" id="CP000034">
    <property type="protein sequence ID" value="ABB60313.1"/>
    <property type="molecule type" value="Genomic_DNA"/>
</dbReference>
<dbReference type="RefSeq" id="WP_000610901.1">
    <property type="nucleotide sequence ID" value="NC_007606.1"/>
</dbReference>
<dbReference type="RefSeq" id="YP_401802.1">
    <property type="nucleotide sequence ID" value="NC_007606.1"/>
</dbReference>
<dbReference type="SMR" id="Q32K44"/>
<dbReference type="STRING" id="300267.SDY_0075"/>
<dbReference type="EnsemblBacteria" id="ABB60313">
    <property type="protein sequence ID" value="ABB60313"/>
    <property type="gene ID" value="SDY_0075"/>
</dbReference>
<dbReference type="GeneID" id="93777385"/>
<dbReference type="KEGG" id="sdy:SDY_0075"/>
<dbReference type="PATRIC" id="fig|300267.13.peg.85"/>
<dbReference type="HOGENOM" id="CLU_128074_0_0_6"/>
<dbReference type="Proteomes" id="UP000002716">
    <property type="component" value="Chromosome"/>
</dbReference>
<dbReference type="GO" id="GO:0070987">
    <property type="term" value="P:error-free translesion synthesis"/>
    <property type="evidence" value="ECO:0007669"/>
    <property type="project" value="TreeGrafter"/>
</dbReference>
<dbReference type="Gene3D" id="2.60.40.1470">
    <property type="entry name" value="ApaG domain"/>
    <property type="match status" value="1"/>
</dbReference>
<dbReference type="HAMAP" id="MF_00791">
    <property type="entry name" value="ApaG"/>
    <property type="match status" value="1"/>
</dbReference>
<dbReference type="InterPro" id="IPR007474">
    <property type="entry name" value="ApaG_domain"/>
</dbReference>
<dbReference type="InterPro" id="IPR036767">
    <property type="entry name" value="ApaG_sf"/>
</dbReference>
<dbReference type="InterPro" id="IPR023065">
    <property type="entry name" value="Uncharacterised_ApaG"/>
</dbReference>
<dbReference type="NCBIfam" id="NF003967">
    <property type="entry name" value="PRK05461.1"/>
    <property type="match status" value="1"/>
</dbReference>
<dbReference type="PANTHER" id="PTHR14289">
    <property type="entry name" value="F-BOX ONLY PROTEIN 3"/>
    <property type="match status" value="1"/>
</dbReference>
<dbReference type="PANTHER" id="PTHR14289:SF16">
    <property type="entry name" value="POLYMERASE DELTA-INTERACTING PROTEIN 2"/>
    <property type="match status" value="1"/>
</dbReference>
<dbReference type="Pfam" id="PF04379">
    <property type="entry name" value="DUF525"/>
    <property type="match status" value="1"/>
</dbReference>
<dbReference type="SUPFAM" id="SSF110069">
    <property type="entry name" value="ApaG-like"/>
    <property type="match status" value="1"/>
</dbReference>
<dbReference type="PROSITE" id="PS51087">
    <property type="entry name" value="APAG"/>
    <property type="match status" value="1"/>
</dbReference>
<name>APAG_SHIDS</name>
<evidence type="ECO:0000255" key="1">
    <source>
        <dbReference type="HAMAP-Rule" id="MF_00791"/>
    </source>
</evidence>
<proteinExistence type="inferred from homology"/>
<keyword id="KW-1185">Reference proteome</keyword>
<gene>
    <name evidence="1" type="primary">apaG</name>
    <name type="ordered locus">SDY_0075</name>
</gene>
<sequence length="125" mass="13867">MINSPRVCIQVQSVYIEAQSSPDNERYVFAYTVTIRNLGRAPVQLLGRYWLITNGNGRETEVQGEGVVGVQPLIAPGEEYQYTSGAIIETPLGTMQGHYEMIDENGVPFSIDIPVFRLAVPTLIH</sequence>
<feature type="chain" id="PRO_1000083660" description="Protein ApaG">
    <location>
        <begin position="1"/>
        <end position="125"/>
    </location>
</feature>
<feature type="domain" description="ApaG" evidence="1">
    <location>
        <begin position="1"/>
        <end position="125"/>
    </location>
</feature>
<organism>
    <name type="scientific">Shigella dysenteriae serotype 1 (strain Sd197)</name>
    <dbReference type="NCBI Taxonomy" id="300267"/>
    <lineage>
        <taxon>Bacteria</taxon>
        <taxon>Pseudomonadati</taxon>
        <taxon>Pseudomonadota</taxon>
        <taxon>Gammaproteobacteria</taxon>
        <taxon>Enterobacterales</taxon>
        <taxon>Enterobacteriaceae</taxon>
        <taxon>Shigella</taxon>
    </lineage>
</organism>
<protein>
    <recommendedName>
        <fullName evidence="1">Protein ApaG</fullName>
    </recommendedName>
</protein>
<accession>Q32K44</accession>
<reference key="1">
    <citation type="journal article" date="2005" name="Nucleic Acids Res.">
        <title>Genome dynamics and diversity of Shigella species, the etiologic agents of bacillary dysentery.</title>
        <authorList>
            <person name="Yang F."/>
            <person name="Yang J."/>
            <person name="Zhang X."/>
            <person name="Chen L."/>
            <person name="Jiang Y."/>
            <person name="Yan Y."/>
            <person name="Tang X."/>
            <person name="Wang J."/>
            <person name="Xiong Z."/>
            <person name="Dong J."/>
            <person name="Xue Y."/>
            <person name="Zhu Y."/>
            <person name="Xu X."/>
            <person name="Sun L."/>
            <person name="Chen S."/>
            <person name="Nie H."/>
            <person name="Peng J."/>
            <person name="Xu J."/>
            <person name="Wang Y."/>
            <person name="Yuan Z."/>
            <person name="Wen Y."/>
            <person name="Yao Z."/>
            <person name="Shen Y."/>
            <person name="Qiang B."/>
            <person name="Hou Y."/>
            <person name="Yu J."/>
            <person name="Jin Q."/>
        </authorList>
    </citation>
    <scope>NUCLEOTIDE SEQUENCE [LARGE SCALE GENOMIC DNA]</scope>
    <source>
        <strain>Sd197</strain>
    </source>
</reference>